<sequence>MLDITEIKKIIPHRYPMLLIDRVEELIPGEKAVAKRNVTINEELFNGHFPGNPVMPGVLIVEALAQTGAVALLSLPEFKGKTAYFGGIKSAKFRKVVRPGDSLRLEVTLEKIRNNVGLGKAIATVDGKKACTAELTFMIG</sequence>
<dbReference type="EC" id="4.2.1.59" evidence="1"/>
<dbReference type="EMBL" id="CP000233">
    <property type="protein sequence ID" value="ABD99267.1"/>
    <property type="molecule type" value="Genomic_DNA"/>
</dbReference>
<dbReference type="RefSeq" id="WP_003699740.1">
    <property type="nucleotide sequence ID" value="NC_007929.1"/>
</dbReference>
<dbReference type="RefSeq" id="YP_535350.1">
    <property type="nucleotide sequence ID" value="NC_007929.1"/>
</dbReference>
<dbReference type="SMR" id="Q1WUR8"/>
<dbReference type="STRING" id="362948.LSL_0457"/>
<dbReference type="GeneID" id="89465242"/>
<dbReference type="KEGG" id="lsl:LSL_0457"/>
<dbReference type="PATRIC" id="fig|362948.14.peg.533"/>
<dbReference type="HOGENOM" id="CLU_078912_1_1_9"/>
<dbReference type="OrthoDB" id="9772788at2"/>
<dbReference type="Proteomes" id="UP000006559">
    <property type="component" value="Chromosome"/>
</dbReference>
<dbReference type="GO" id="GO:0005737">
    <property type="term" value="C:cytoplasm"/>
    <property type="evidence" value="ECO:0007669"/>
    <property type="project" value="UniProtKB-SubCell"/>
</dbReference>
<dbReference type="GO" id="GO:0016020">
    <property type="term" value="C:membrane"/>
    <property type="evidence" value="ECO:0007669"/>
    <property type="project" value="GOC"/>
</dbReference>
<dbReference type="GO" id="GO:0019171">
    <property type="term" value="F:(3R)-hydroxyacyl-[acyl-carrier-protein] dehydratase activity"/>
    <property type="evidence" value="ECO:0007669"/>
    <property type="project" value="UniProtKB-EC"/>
</dbReference>
<dbReference type="GO" id="GO:0006633">
    <property type="term" value="P:fatty acid biosynthetic process"/>
    <property type="evidence" value="ECO:0007669"/>
    <property type="project" value="UniProtKB-UniRule"/>
</dbReference>
<dbReference type="GO" id="GO:0009245">
    <property type="term" value="P:lipid A biosynthetic process"/>
    <property type="evidence" value="ECO:0007669"/>
    <property type="project" value="UniProtKB-UniRule"/>
</dbReference>
<dbReference type="CDD" id="cd01288">
    <property type="entry name" value="FabZ"/>
    <property type="match status" value="1"/>
</dbReference>
<dbReference type="FunFam" id="3.10.129.10:FF:000001">
    <property type="entry name" value="3-hydroxyacyl-[acyl-carrier-protein] dehydratase FabZ"/>
    <property type="match status" value="1"/>
</dbReference>
<dbReference type="Gene3D" id="3.10.129.10">
    <property type="entry name" value="Hotdog Thioesterase"/>
    <property type="match status" value="1"/>
</dbReference>
<dbReference type="HAMAP" id="MF_00406">
    <property type="entry name" value="FabZ"/>
    <property type="match status" value="1"/>
</dbReference>
<dbReference type="InterPro" id="IPR013114">
    <property type="entry name" value="FabA_FabZ"/>
</dbReference>
<dbReference type="InterPro" id="IPR010084">
    <property type="entry name" value="FabZ"/>
</dbReference>
<dbReference type="InterPro" id="IPR029069">
    <property type="entry name" value="HotDog_dom_sf"/>
</dbReference>
<dbReference type="NCBIfam" id="TIGR01750">
    <property type="entry name" value="fabZ"/>
    <property type="match status" value="1"/>
</dbReference>
<dbReference type="NCBIfam" id="NF000582">
    <property type="entry name" value="PRK00006.1"/>
    <property type="match status" value="1"/>
</dbReference>
<dbReference type="PANTHER" id="PTHR30272">
    <property type="entry name" value="3-HYDROXYACYL-[ACYL-CARRIER-PROTEIN] DEHYDRATASE"/>
    <property type="match status" value="1"/>
</dbReference>
<dbReference type="PANTHER" id="PTHR30272:SF1">
    <property type="entry name" value="3-HYDROXYACYL-[ACYL-CARRIER-PROTEIN] DEHYDRATASE"/>
    <property type="match status" value="1"/>
</dbReference>
<dbReference type="Pfam" id="PF07977">
    <property type="entry name" value="FabA"/>
    <property type="match status" value="1"/>
</dbReference>
<dbReference type="SUPFAM" id="SSF54637">
    <property type="entry name" value="Thioesterase/thiol ester dehydrase-isomerase"/>
    <property type="match status" value="1"/>
</dbReference>
<protein>
    <recommendedName>
        <fullName evidence="1">3-hydroxyacyl-[acyl-carrier-protein] dehydratase FabZ</fullName>
        <ecNumber evidence="1">4.2.1.59</ecNumber>
    </recommendedName>
    <alternativeName>
        <fullName evidence="1">(3R)-hydroxymyristoyl-[acyl-carrier-protein] dehydratase</fullName>
        <shortName evidence="1">(3R)-hydroxymyristoyl-ACP dehydrase</shortName>
    </alternativeName>
    <alternativeName>
        <fullName evidence="1">Beta-hydroxyacyl-ACP dehydratase</fullName>
    </alternativeName>
</protein>
<reference key="1">
    <citation type="journal article" date="2006" name="Proc. Natl. Acad. Sci. U.S.A.">
        <title>Multireplicon genome architecture of Lactobacillus salivarius.</title>
        <authorList>
            <person name="Claesson M.J."/>
            <person name="Li Y."/>
            <person name="Leahy S."/>
            <person name="Canchaya C."/>
            <person name="van Pijkeren J.P."/>
            <person name="Cerdeno-Tarraga A.M."/>
            <person name="Parkhill J."/>
            <person name="Flynn S."/>
            <person name="O'Sullivan G.C."/>
            <person name="Collins J.K."/>
            <person name="Higgins D."/>
            <person name="Shanahan F."/>
            <person name="Fitzgerald G.F."/>
            <person name="van Sinderen D."/>
            <person name="O'Toole P.W."/>
        </authorList>
    </citation>
    <scope>NUCLEOTIDE SEQUENCE [LARGE SCALE GENOMIC DNA]</scope>
    <source>
        <strain>UCC118</strain>
    </source>
</reference>
<gene>
    <name evidence="1" type="primary">fabZ</name>
    <name type="ordered locus">LSL_0457</name>
</gene>
<comment type="function">
    <text evidence="1">Involved in unsaturated fatty acids biosynthesis. Catalyzes the dehydration of short chain beta-hydroxyacyl-ACPs and long chain saturated and unsaturated beta-hydroxyacyl-ACPs.</text>
</comment>
<comment type="catalytic activity">
    <reaction evidence="1">
        <text>a (3R)-hydroxyacyl-[ACP] = a (2E)-enoyl-[ACP] + H2O</text>
        <dbReference type="Rhea" id="RHEA:13097"/>
        <dbReference type="Rhea" id="RHEA-COMP:9925"/>
        <dbReference type="Rhea" id="RHEA-COMP:9945"/>
        <dbReference type="ChEBI" id="CHEBI:15377"/>
        <dbReference type="ChEBI" id="CHEBI:78784"/>
        <dbReference type="ChEBI" id="CHEBI:78827"/>
        <dbReference type="EC" id="4.2.1.59"/>
    </reaction>
</comment>
<comment type="subcellular location">
    <subcellularLocation>
        <location evidence="1">Cytoplasm</location>
    </subcellularLocation>
</comment>
<comment type="similarity">
    <text evidence="1">Belongs to the thioester dehydratase family. FabZ subfamily.</text>
</comment>
<organism>
    <name type="scientific">Ligilactobacillus salivarius (strain UCC118)</name>
    <name type="common">Lactobacillus salivarius</name>
    <dbReference type="NCBI Taxonomy" id="362948"/>
    <lineage>
        <taxon>Bacteria</taxon>
        <taxon>Bacillati</taxon>
        <taxon>Bacillota</taxon>
        <taxon>Bacilli</taxon>
        <taxon>Lactobacillales</taxon>
        <taxon>Lactobacillaceae</taxon>
        <taxon>Ligilactobacillus</taxon>
    </lineage>
</organism>
<name>FABZ_LIGS1</name>
<feature type="chain" id="PRO_0000301899" description="3-hydroxyacyl-[acyl-carrier-protein] dehydratase FabZ">
    <location>
        <begin position="1"/>
        <end position="140"/>
    </location>
</feature>
<feature type="active site" evidence="1">
    <location>
        <position position="48"/>
    </location>
</feature>
<accession>Q1WUR8</accession>
<keyword id="KW-0963">Cytoplasm</keyword>
<keyword id="KW-0441">Lipid A biosynthesis</keyword>
<keyword id="KW-0444">Lipid biosynthesis</keyword>
<keyword id="KW-0443">Lipid metabolism</keyword>
<keyword id="KW-0456">Lyase</keyword>
<keyword id="KW-1185">Reference proteome</keyword>
<evidence type="ECO:0000255" key="1">
    <source>
        <dbReference type="HAMAP-Rule" id="MF_00406"/>
    </source>
</evidence>
<proteinExistence type="inferred from homology"/>